<comment type="catalytic activity">
    <reaction evidence="1">
        <text>tRNA(Cys) + L-cysteine + ATP = L-cysteinyl-tRNA(Cys) + AMP + diphosphate</text>
        <dbReference type="Rhea" id="RHEA:17773"/>
        <dbReference type="Rhea" id="RHEA-COMP:9661"/>
        <dbReference type="Rhea" id="RHEA-COMP:9679"/>
        <dbReference type="ChEBI" id="CHEBI:30616"/>
        <dbReference type="ChEBI" id="CHEBI:33019"/>
        <dbReference type="ChEBI" id="CHEBI:35235"/>
        <dbReference type="ChEBI" id="CHEBI:78442"/>
        <dbReference type="ChEBI" id="CHEBI:78517"/>
        <dbReference type="ChEBI" id="CHEBI:456215"/>
        <dbReference type="EC" id="6.1.1.16"/>
    </reaction>
</comment>
<comment type="cofactor">
    <cofactor evidence="1">
        <name>Zn(2+)</name>
        <dbReference type="ChEBI" id="CHEBI:29105"/>
    </cofactor>
    <text evidence="1">Binds 1 zinc ion per subunit.</text>
</comment>
<comment type="subunit">
    <text evidence="1">Monomer.</text>
</comment>
<comment type="subcellular location">
    <subcellularLocation>
        <location evidence="1">Cytoplasm</location>
    </subcellularLocation>
</comment>
<comment type="similarity">
    <text evidence="1">Belongs to the class-I aminoacyl-tRNA synthetase family.</text>
</comment>
<comment type="sequence caution" evidence="2">
    <conflict type="erroneous initiation">
        <sequence resource="EMBL-CDS" id="BAC94126"/>
    </conflict>
</comment>
<reference key="1">
    <citation type="journal article" date="2003" name="Genome Res.">
        <title>Comparative genome analysis of Vibrio vulnificus, a marine pathogen.</title>
        <authorList>
            <person name="Chen C.-Y."/>
            <person name="Wu K.-M."/>
            <person name="Chang Y.-C."/>
            <person name="Chang C.-H."/>
            <person name="Tsai H.-C."/>
            <person name="Liao T.-L."/>
            <person name="Liu Y.-M."/>
            <person name="Chen H.-J."/>
            <person name="Shen A.B.-T."/>
            <person name="Li J.-C."/>
            <person name="Su T.-L."/>
            <person name="Shao C.-P."/>
            <person name="Lee C.-T."/>
            <person name="Hor L.-I."/>
            <person name="Tsai S.-F."/>
        </authorList>
    </citation>
    <scope>NUCLEOTIDE SEQUENCE [LARGE SCALE GENOMIC DNA]</scope>
    <source>
        <strain>YJ016</strain>
    </source>
</reference>
<evidence type="ECO:0000255" key="1">
    <source>
        <dbReference type="HAMAP-Rule" id="MF_00041"/>
    </source>
</evidence>
<evidence type="ECO:0000305" key="2"/>
<accession>Q7MLR5</accession>
<sequence>MLKIYNTLTRQKEEFKPITAGKVGMYVCGVTIYDLCHIGHGRTFVSFDVVSRYLRYLGYDLTFVRNITDIDDKIIKRAAENGETCDSLTERLIGEMHADFDALNMKRPDVEPRATQYIQEIIELVERLIERGFAYVADNGDVMFEVNKFDEYGKLSKQDLDQLQAGARVDVETAKRCPLDFVLWKMSKPGEPTWESPWGPGRPGWHIECSAMNSSILGNHFDIHGGGSDLQFPHHENEIAQSCCAHDTQYVNTWMHSGMVMVDKEKMSKSLGNFFTIRDVLGHYDAETVRYFLMSGHYRSQLNYSEENLNQARASLERLYTSLRGLDFSAAPAGGEEYVSRFTAAMNDDFNTPEAYSVLFDMAREINRLKTEDLANASALGALMRELADVIGILHQDPEAFLKGDAGNDDEVAEIEALIKLRNDSRAAKDWANADMARDKLNEMGIVLEDGPDGTTWRRK</sequence>
<protein>
    <recommendedName>
        <fullName evidence="1">Cysteine--tRNA ligase</fullName>
        <ecNumber evidence="1">6.1.1.16</ecNumber>
    </recommendedName>
    <alternativeName>
        <fullName evidence="1">Cysteinyl-tRNA synthetase</fullName>
        <shortName evidence="1">CysRS</shortName>
    </alternativeName>
</protein>
<name>SYC_VIBVY</name>
<gene>
    <name evidence="1" type="primary">cysS</name>
    <name type="ordered locus">VV1362</name>
</gene>
<feature type="chain" id="PRO_0000159521" description="Cysteine--tRNA ligase">
    <location>
        <begin position="1"/>
        <end position="460"/>
    </location>
</feature>
<feature type="short sequence motif" description="'HIGH' region">
    <location>
        <begin position="30"/>
        <end position="40"/>
    </location>
</feature>
<feature type="short sequence motif" description="'KMSKS' region">
    <location>
        <begin position="266"/>
        <end position="270"/>
    </location>
</feature>
<feature type="binding site" evidence="1">
    <location>
        <position position="28"/>
    </location>
    <ligand>
        <name>Zn(2+)</name>
        <dbReference type="ChEBI" id="CHEBI:29105"/>
    </ligand>
</feature>
<feature type="binding site" evidence="1">
    <location>
        <position position="209"/>
    </location>
    <ligand>
        <name>Zn(2+)</name>
        <dbReference type="ChEBI" id="CHEBI:29105"/>
    </ligand>
</feature>
<feature type="binding site" evidence="1">
    <location>
        <position position="234"/>
    </location>
    <ligand>
        <name>Zn(2+)</name>
        <dbReference type="ChEBI" id="CHEBI:29105"/>
    </ligand>
</feature>
<feature type="binding site" evidence="1">
    <location>
        <position position="238"/>
    </location>
    <ligand>
        <name>Zn(2+)</name>
        <dbReference type="ChEBI" id="CHEBI:29105"/>
    </ligand>
</feature>
<feature type="binding site" evidence="1">
    <location>
        <position position="269"/>
    </location>
    <ligand>
        <name>ATP</name>
        <dbReference type="ChEBI" id="CHEBI:30616"/>
    </ligand>
</feature>
<dbReference type="EC" id="6.1.1.16" evidence="1"/>
<dbReference type="EMBL" id="BA000037">
    <property type="protein sequence ID" value="BAC94126.1"/>
    <property type="status" value="ALT_INIT"/>
    <property type="molecule type" value="Genomic_DNA"/>
</dbReference>
<dbReference type="RefSeq" id="WP_013572016.1">
    <property type="nucleotide sequence ID" value="NC_005139.1"/>
</dbReference>
<dbReference type="SMR" id="Q7MLR5"/>
<dbReference type="STRING" id="672.VV93_v1c12750"/>
<dbReference type="KEGG" id="vvy:VV1362"/>
<dbReference type="PATRIC" id="fig|196600.6.peg.1351"/>
<dbReference type="eggNOG" id="COG0215">
    <property type="taxonomic scope" value="Bacteria"/>
</dbReference>
<dbReference type="HOGENOM" id="CLU_013528_0_1_6"/>
<dbReference type="Proteomes" id="UP000002675">
    <property type="component" value="Chromosome I"/>
</dbReference>
<dbReference type="GO" id="GO:0005829">
    <property type="term" value="C:cytosol"/>
    <property type="evidence" value="ECO:0007669"/>
    <property type="project" value="TreeGrafter"/>
</dbReference>
<dbReference type="GO" id="GO:0005524">
    <property type="term" value="F:ATP binding"/>
    <property type="evidence" value="ECO:0007669"/>
    <property type="project" value="UniProtKB-UniRule"/>
</dbReference>
<dbReference type="GO" id="GO:0004817">
    <property type="term" value="F:cysteine-tRNA ligase activity"/>
    <property type="evidence" value="ECO:0007669"/>
    <property type="project" value="UniProtKB-UniRule"/>
</dbReference>
<dbReference type="GO" id="GO:0008270">
    <property type="term" value="F:zinc ion binding"/>
    <property type="evidence" value="ECO:0007669"/>
    <property type="project" value="UniProtKB-UniRule"/>
</dbReference>
<dbReference type="GO" id="GO:0006423">
    <property type="term" value="P:cysteinyl-tRNA aminoacylation"/>
    <property type="evidence" value="ECO:0007669"/>
    <property type="project" value="UniProtKB-UniRule"/>
</dbReference>
<dbReference type="CDD" id="cd07963">
    <property type="entry name" value="Anticodon_Ia_Cys"/>
    <property type="match status" value="1"/>
</dbReference>
<dbReference type="CDD" id="cd00672">
    <property type="entry name" value="CysRS_core"/>
    <property type="match status" value="1"/>
</dbReference>
<dbReference type="FunFam" id="1.20.120.1910:FF:000001">
    <property type="entry name" value="Cysteine--tRNA ligase"/>
    <property type="match status" value="1"/>
</dbReference>
<dbReference type="FunFam" id="3.40.50.620:FF:000009">
    <property type="entry name" value="Cysteine--tRNA ligase"/>
    <property type="match status" value="1"/>
</dbReference>
<dbReference type="Gene3D" id="1.20.120.1910">
    <property type="entry name" value="Cysteine-tRNA ligase, C-terminal anti-codon recognition domain"/>
    <property type="match status" value="1"/>
</dbReference>
<dbReference type="Gene3D" id="3.40.50.620">
    <property type="entry name" value="HUPs"/>
    <property type="match status" value="1"/>
</dbReference>
<dbReference type="HAMAP" id="MF_00041">
    <property type="entry name" value="Cys_tRNA_synth"/>
    <property type="match status" value="1"/>
</dbReference>
<dbReference type="InterPro" id="IPR015803">
    <property type="entry name" value="Cys-tRNA-ligase"/>
</dbReference>
<dbReference type="InterPro" id="IPR015273">
    <property type="entry name" value="Cys-tRNA-synt_Ia_DALR"/>
</dbReference>
<dbReference type="InterPro" id="IPR024909">
    <property type="entry name" value="Cys-tRNA/MSH_ligase"/>
</dbReference>
<dbReference type="InterPro" id="IPR056411">
    <property type="entry name" value="CysS_C"/>
</dbReference>
<dbReference type="InterPro" id="IPR014729">
    <property type="entry name" value="Rossmann-like_a/b/a_fold"/>
</dbReference>
<dbReference type="InterPro" id="IPR032678">
    <property type="entry name" value="tRNA-synt_1_cat_dom"/>
</dbReference>
<dbReference type="InterPro" id="IPR009080">
    <property type="entry name" value="tRNAsynth_Ia_anticodon-bd"/>
</dbReference>
<dbReference type="NCBIfam" id="TIGR00435">
    <property type="entry name" value="cysS"/>
    <property type="match status" value="1"/>
</dbReference>
<dbReference type="PANTHER" id="PTHR10890:SF3">
    <property type="entry name" value="CYSTEINE--TRNA LIGASE, CYTOPLASMIC"/>
    <property type="match status" value="1"/>
</dbReference>
<dbReference type="PANTHER" id="PTHR10890">
    <property type="entry name" value="CYSTEINYL-TRNA SYNTHETASE"/>
    <property type="match status" value="1"/>
</dbReference>
<dbReference type="Pfam" id="PF23493">
    <property type="entry name" value="CysS_C"/>
    <property type="match status" value="1"/>
</dbReference>
<dbReference type="Pfam" id="PF09190">
    <property type="entry name" value="DALR_2"/>
    <property type="match status" value="1"/>
</dbReference>
<dbReference type="Pfam" id="PF01406">
    <property type="entry name" value="tRNA-synt_1e"/>
    <property type="match status" value="1"/>
</dbReference>
<dbReference type="PRINTS" id="PR00983">
    <property type="entry name" value="TRNASYNTHCYS"/>
</dbReference>
<dbReference type="SMART" id="SM00840">
    <property type="entry name" value="DALR_2"/>
    <property type="match status" value="1"/>
</dbReference>
<dbReference type="SUPFAM" id="SSF47323">
    <property type="entry name" value="Anticodon-binding domain of a subclass of class I aminoacyl-tRNA synthetases"/>
    <property type="match status" value="1"/>
</dbReference>
<dbReference type="SUPFAM" id="SSF52374">
    <property type="entry name" value="Nucleotidylyl transferase"/>
    <property type="match status" value="1"/>
</dbReference>
<organism>
    <name type="scientific">Vibrio vulnificus (strain YJ016)</name>
    <dbReference type="NCBI Taxonomy" id="196600"/>
    <lineage>
        <taxon>Bacteria</taxon>
        <taxon>Pseudomonadati</taxon>
        <taxon>Pseudomonadota</taxon>
        <taxon>Gammaproteobacteria</taxon>
        <taxon>Vibrionales</taxon>
        <taxon>Vibrionaceae</taxon>
        <taxon>Vibrio</taxon>
    </lineage>
</organism>
<proteinExistence type="inferred from homology"/>
<keyword id="KW-0030">Aminoacyl-tRNA synthetase</keyword>
<keyword id="KW-0067">ATP-binding</keyword>
<keyword id="KW-0963">Cytoplasm</keyword>
<keyword id="KW-0436">Ligase</keyword>
<keyword id="KW-0479">Metal-binding</keyword>
<keyword id="KW-0547">Nucleotide-binding</keyword>
<keyword id="KW-0648">Protein biosynthesis</keyword>
<keyword id="KW-0862">Zinc</keyword>